<feature type="chain" id="PRO_1000076875" description="Pantothenate synthetase">
    <location>
        <begin position="1"/>
        <end position="280"/>
    </location>
</feature>
<feature type="active site" description="Proton donor" evidence="1">
    <location>
        <position position="37"/>
    </location>
</feature>
<feature type="binding site" evidence="1">
    <location>
        <begin position="30"/>
        <end position="37"/>
    </location>
    <ligand>
        <name>ATP</name>
        <dbReference type="ChEBI" id="CHEBI:30616"/>
    </ligand>
</feature>
<feature type="binding site" evidence="1">
    <location>
        <position position="61"/>
    </location>
    <ligand>
        <name>(R)-pantoate</name>
        <dbReference type="ChEBI" id="CHEBI:15980"/>
    </ligand>
</feature>
<feature type="binding site" evidence="1">
    <location>
        <position position="61"/>
    </location>
    <ligand>
        <name>beta-alanine</name>
        <dbReference type="ChEBI" id="CHEBI:57966"/>
    </ligand>
</feature>
<feature type="binding site" evidence="1">
    <location>
        <begin position="147"/>
        <end position="150"/>
    </location>
    <ligand>
        <name>ATP</name>
        <dbReference type="ChEBI" id="CHEBI:30616"/>
    </ligand>
</feature>
<feature type="binding site" evidence="1">
    <location>
        <position position="153"/>
    </location>
    <ligand>
        <name>(R)-pantoate</name>
        <dbReference type="ChEBI" id="CHEBI:15980"/>
    </ligand>
</feature>
<feature type="binding site" evidence="1">
    <location>
        <position position="176"/>
    </location>
    <ligand>
        <name>ATP</name>
        <dbReference type="ChEBI" id="CHEBI:30616"/>
    </ligand>
</feature>
<feature type="binding site" evidence="1">
    <location>
        <begin position="184"/>
        <end position="187"/>
    </location>
    <ligand>
        <name>ATP</name>
        <dbReference type="ChEBI" id="CHEBI:30616"/>
    </ligand>
</feature>
<proteinExistence type="inferred from homology"/>
<protein>
    <recommendedName>
        <fullName evidence="1">Pantothenate synthetase</fullName>
        <shortName evidence="1">PS</shortName>
        <ecNumber evidence="1">6.3.2.1</ecNumber>
    </recommendedName>
    <alternativeName>
        <fullName evidence="1">Pantoate--beta-alanine ligase</fullName>
    </alternativeName>
    <alternativeName>
        <fullName evidence="1">Pantoate-activating enzyme</fullName>
    </alternativeName>
</protein>
<dbReference type="EC" id="6.3.2.1" evidence="1"/>
<dbReference type="EMBL" id="CP000702">
    <property type="protein sequence ID" value="ABQ47672.1"/>
    <property type="molecule type" value="Genomic_DNA"/>
</dbReference>
<dbReference type="RefSeq" id="WP_011944080.1">
    <property type="nucleotide sequence ID" value="NC_009486.1"/>
</dbReference>
<dbReference type="SMR" id="A5IN99"/>
<dbReference type="STRING" id="390874.Tpet_1667"/>
<dbReference type="KEGG" id="tpt:Tpet_1667"/>
<dbReference type="eggNOG" id="COG0414">
    <property type="taxonomic scope" value="Bacteria"/>
</dbReference>
<dbReference type="HOGENOM" id="CLU_047148_0_0_0"/>
<dbReference type="UniPathway" id="UPA00028">
    <property type="reaction ID" value="UER00005"/>
</dbReference>
<dbReference type="Proteomes" id="UP000006558">
    <property type="component" value="Chromosome"/>
</dbReference>
<dbReference type="GO" id="GO:0005829">
    <property type="term" value="C:cytosol"/>
    <property type="evidence" value="ECO:0007669"/>
    <property type="project" value="TreeGrafter"/>
</dbReference>
<dbReference type="GO" id="GO:0005524">
    <property type="term" value="F:ATP binding"/>
    <property type="evidence" value="ECO:0007669"/>
    <property type="project" value="UniProtKB-KW"/>
</dbReference>
<dbReference type="GO" id="GO:0004592">
    <property type="term" value="F:pantoate-beta-alanine ligase activity"/>
    <property type="evidence" value="ECO:0007669"/>
    <property type="project" value="UniProtKB-UniRule"/>
</dbReference>
<dbReference type="GO" id="GO:0015940">
    <property type="term" value="P:pantothenate biosynthetic process"/>
    <property type="evidence" value="ECO:0007669"/>
    <property type="project" value="UniProtKB-UniRule"/>
</dbReference>
<dbReference type="CDD" id="cd00560">
    <property type="entry name" value="PanC"/>
    <property type="match status" value="1"/>
</dbReference>
<dbReference type="FunFam" id="3.30.1300.10:FF:000001">
    <property type="entry name" value="Pantothenate synthetase"/>
    <property type="match status" value="1"/>
</dbReference>
<dbReference type="FunFam" id="3.40.50.620:FF:000013">
    <property type="entry name" value="Pantothenate synthetase"/>
    <property type="match status" value="1"/>
</dbReference>
<dbReference type="Gene3D" id="3.40.50.620">
    <property type="entry name" value="HUPs"/>
    <property type="match status" value="1"/>
</dbReference>
<dbReference type="Gene3D" id="3.30.1300.10">
    <property type="entry name" value="Pantoate-beta-alanine ligase, C-terminal domain"/>
    <property type="match status" value="1"/>
</dbReference>
<dbReference type="HAMAP" id="MF_00158">
    <property type="entry name" value="PanC"/>
    <property type="match status" value="1"/>
</dbReference>
<dbReference type="InterPro" id="IPR004821">
    <property type="entry name" value="Cyt_trans-like"/>
</dbReference>
<dbReference type="InterPro" id="IPR003721">
    <property type="entry name" value="Pantoate_ligase"/>
</dbReference>
<dbReference type="InterPro" id="IPR042176">
    <property type="entry name" value="Pantoate_ligase_C"/>
</dbReference>
<dbReference type="InterPro" id="IPR014729">
    <property type="entry name" value="Rossmann-like_a/b/a_fold"/>
</dbReference>
<dbReference type="NCBIfam" id="TIGR00125">
    <property type="entry name" value="cyt_tran_rel"/>
    <property type="match status" value="1"/>
</dbReference>
<dbReference type="NCBIfam" id="TIGR00018">
    <property type="entry name" value="panC"/>
    <property type="match status" value="1"/>
</dbReference>
<dbReference type="PANTHER" id="PTHR21299">
    <property type="entry name" value="CYTIDYLATE KINASE/PANTOATE-BETA-ALANINE LIGASE"/>
    <property type="match status" value="1"/>
</dbReference>
<dbReference type="PANTHER" id="PTHR21299:SF1">
    <property type="entry name" value="PANTOATE--BETA-ALANINE LIGASE"/>
    <property type="match status" value="1"/>
</dbReference>
<dbReference type="Pfam" id="PF02569">
    <property type="entry name" value="Pantoate_ligase"/>
    <property type="match status" value="1"/>
</dbReference>
<dbReference type="SUPFAM" id="SSF52374">
    <property type="entry name" value="Nucleotidylyl transferase"/>
    <property type="match status" value="1"/>
</dbReference>
<evidence type="ECO:0000255" key="1">
    <source>
        <dbReference type="HAMAP-Rule" id="MF_00158"/>
    </source>
</evidence>
<gene>
    <name evidence="1" type="primary">panC</name>
    <name type="ordered locus">Tpet_1667</name>
</gene>
<comment type="function">
    <text evidence="1">Catalyzes the condensation of pantoate with beta-alanine in an ATP-dependent reaction via a pantoyl-adenylate intermediate.</text>
</comment>
<comment type="catalytic activity">
    <reaction evidence="1">
        <text>(R)-pantoate + beta-alanine + ATP = (R)-pantothenate + AMP + diphosphate + H(+)</text>
        <dbReference type="Rhea" id="RHEA:10912"/>
        <dbReference type="ChEBI" id="CHEBI:15378"/>
        <dbReference type="ChEBI" id="CHEBI:15980"/>
        <dbReference type="ChEBI" id="CHEBI:29032"/>
        <dbReference type="ChEBI" id="CHEBI:30616"/>
        <dbReference type="ChEBI" id="CHEBI:33019"/>
        <dbReference type="ChEBI" id="CHEBI:57966"/>
        <dbReference type="ChEBI" id="CHEBI:456215"/>
        <dbReference type="EC" id="6.3.2.1"/>
    </reaction>
</comment>
<comment type="pathway">
    <text evidence="1">Cofactor biosynthesis; (R)-pantothenate biosynthesis; (R)-pantothenate from (R)-pantoate and beta-alanine: step 1/1.</text>
</comment>
<comment type="subunit">
    <text evidence="1">Homodimer.</text>
</comment>
<comment type="subcellular location">
    <subcellularLocation>
        <location evidence="1">Cytoplasm</location>
    </subcellularLocation>
</comment>
<comment type="miscellaneous">
    <text evidence="1">The reaction proceeds by a bi uni uni bi ping pong mechanism.</text>
</comment>
<comment type="similarity">
    <text evidence="1">Belongs to the pantothenate synthetase family.</text>
</comment>
<organism>
    <name type="scientific">Thermotoga petrophila (strain ATCC BAA-488 / DSM 13995 / JCM 10881 / RKU-1)</name>
    <dbReference type="NCBI Taxonomy" id="390874"/>
    <lineage>
        <taxon>Bacteria</taxon>
        <taxon>Thermotogati</taxon>
        <taxon>Thermotogota</taxon>
        <taxon>Thermotogae</taxon>
        <taxon>Thermotogales</taxon>
        <taxon>Thermotogaceae</taxon>
        <taxon>Thermotoga</taxon>
    </lineage>
</organism>
<accession>A5IN99</accession>
<name>PANC_THEP1</name>
<keyword id="KW-0067">ATP-binding</keyword>
<keyword id="KW-0963">Cytoplasm</keyword>
<keyword id="KW-0436">Ligase</keyword>
<keyword id="KW-0547">Nucleotide-binding</keyword>
<keyword id="KW-0566">Pantothenate biosynthesis</keyword>
<reference key="1">
    <citation type="submission" date="2007-05" db="EMBL/GenBank/DDBJ databases">
        <title>Complete sequence of Thermotoga petrophila RKU-1.</title>
        <authorList>
            <consortium name="US DOE Joint Genome Institute"/>
            <person name="Copeland A."/>
            <person name="Lucas S."/>
            <person name="Lapidus A."/>
            <person name="Barry K."/>
            <person name="Glavina del Rio T."/>
            <person name="Dalin E."/>
            <person name="Tice H."/>
            <person name="Pitluck S."/>
            <person name="Sims D."/>
            <person name="Brettin T."/>
            <person name="Bruce D."/>
            <person name="Detter J.C."/>
            <person name="Han C."/>
            <person name="Tapia R."/>
            <person name="Schmutz J."/>
            <person name="Larimer F."/>
            <person name="Land M."/>
            <person name="Hauser L."/>
            <person name="Kyrpides N."/>
            <person name="Mikhailova N."/>
            <person name="Nelson K."/>
            <person name="Gogarten J.P."/>
            <person name="Noll K."/>
            <person name="Richardson P."/>
        </authorList>
    </citation>
    <scope>NUCLEOTIDE SEQUENCE [LARGE SCALE GENOMIC DNA]</scope>
    <source>
        <strain>ATCC BAA-488 / DSM 13995 / JCM 10881 / RKU-1</strain>
    </source>
</reference>
<sequence length="280" mass="32773">MKIIETIEEMKKFSEEMREKKKTIGFVPTMGYLHEGHLSLVRRARDENDVVVVSIFVNPTQFGPNEDYERYPRDFERDRKLLEKENVDCIFHPSVEEMYPPDFSTYVEETKLSKHLCGRSRPGHFRGVCTVVTKLFNIVKPHRAYFGQKDAQQFRVLRRMVRDLNMDVEMIECPIVREPDGLAMSSRNVYLSPEERQQALSLYQSLKIAENLYLNGERDAEKIKEEMIKHLSRFDKVKIDYVEIVDEETLEPVEKIDRKVIVAVAAWVGNARLIDNTILG</sequence>